<keyword id="KW-0119">Carbohydrate metabolism</keyword>
<keyword id="KW-0136">Cellulose degradation</keyword>
<keyword id="KW-0903">Direct protein sequencing</keyword>
<keyword id="KW-0326">Glycosidase</keyword>
<keyword id="KW-0378">Hydrolase</keyword>
<keyword id="KW-0624">Polysaccharide degradation</keyword>
<keyword id="KW-0732">Signal</keyword>
<gene>
    <name type="primary">celA</name>
</gene>
<evidence type="ECO:0000250" key="1">
    <source>
        <dbReference type="UniProtKB" id="O85465"/>
    </source>
</evidence>
<evidence type="ECO:0000256" key="2">
    <source>
        <dbReference type="SAM" id="MobiDB-lite"/>
    </source>
</evidence>
<evidence type="ECO:0000269" key="3">
    <source>
    </source>
</evidence>
<evidence type="ECO:0000305" key="4"/>
<organism>
    <name type="scientific">Butyrivibrio fibrisolvens</name>
    <dbReference type="NCBI Taxonomy" id="831"/>
    <lineage>
        <taxon>Bacteria</taxon>
        <taxon>Bacillati</taxon>
        <taxon>Bacillota</taxon>
        <taxon>Clostridia</taxon>
        <taxon>Lachnospirales</taxon>
        <taxon>Lachnospiraceae</taxon>
        <taxon>Butyrivibrio</taxon>
    </lineage>
</organism>
<proteinExistence type="evidence at protein level"/>
<dbReference type="EC" id="3.2.1.4"/>
<dbReference type="EMBL" id="M37031">
    <property type="protein sequence ID" value="AAA20893.1"/>
    <property type="molecule type" value="Genomic_DNA"/>
</dbReference>
<dbReference type="PIR" id="S29044">
    <property type="entry name" value="S29044"/>
</dbReference>
<dbReference type="SMR" id="P22541"/>
<dbReference type="CAZy" id="GH5">
    <property type="family name" value="Glycoside Hydrolase Family 5"/>
</dbReference>
<dbReference type="GO" id="GO:0008810">
    <property type="term" value="F:cellulase activity"/>
    <property type="evidence" value="ECO:0007669"/>
    <property type="project" value="UniProtKB-EC"/>
</dbReference>
<dbReference type="GO" id="GO:0030245">
    <property type="term" value="P:cellulose catabolic process"/>
    <property type="evidence" value="ECO:0007669"/>
    <property type="project" value="UniProtKB-KW"/>
</dbReference>
<dbReference type="Gene3D" id="3.20.20.80">
    <property type="entry name" value="Glycosidases"/>
    <property type="match status" value="1"/>
</dbReference>
<dbReference type="InterPro" id="IPR001547">
    <property type="entry name" value="Glyco_hydro_5"/>
</dbReference>
<dbReference type="InterPro" id="IPR018087">
    <property type="entry name" value="Glyco_hydro_5_CS"/>
</dbReference>
<dbReference type="InterPro" id="IPR017853">
    <property type="entry name" value="Glycoside_hydrolase_SF"/>
</dbReference>
<dbReference type="PANTHER" id="PTHR34142">
    <property type="entry name" value="ENDO-BETA-1,4-GLUCANASE A"/>
    <property type="match status" value="1"/>
</dbReference>
<dbReference type="PANTHER" id="PTHR34142:SF1">
    <property type="entry name" value="GLYCOSIDE HYDROLASE FAMILY 5 DOMAIN-CONTAINING PROTEIN"/>
    <property type="match status" value="1"/>
</dbReference>
<dbReference type="Pfam" id="PF00150">
    <property type="entry name" value="Cellulase"/>
    <property type="match status" value="1"/>
</dbReference>
<dbReference type="SUPFAM" id="SSF51445">
    <property type="entry name" value="(Trans)glycosidases"/>
    <property type="match status" value="1"/>
</dbReference>
<dbReference type="PROSITE" id="PS00659">
    <property type="entry name" value="GLYCOSYL_HYDROL_F5"/>
    <property type="match status" value="1"/>
</dbReference>
<comment type="catalytic activity">
    <reaction>
        <text>Endohydrolysis of (1-&gt;4)-beta-D-glucosidic linkages in cellulose, lichenin and cereal beta-D-glucans.</text>
        <dbReference type="EC" id="3.2.1.4"/>
    </reaction>
</comment>
<comment type="similarity">
    <text evidence="4">Belongs to the glycosyl hydrolase 5 (cellulase A) family.</text>
</comment>
<protein>
    <recommendedName>
        <fullName>Endoglucanase A</fullName>
        <ecNumber>3.2.1.4</ecNumber>
    </recommendedName>
    <alternativeName>
        <fullName>Cellulase A</fullName>
    </alternativeName>
    <alternativeName>
        <fullName>Endo-1,4-beta-glucanase A</fullName>
        <shortName>EgA</shortName>
    </alternativeName>
</protein>
<name>GUNA_BUTFI</name>
<sequence length="429" mass="48859">MVSKKQKFLTVILVIVLAIVIVGGVFGISFVKGRVTFPWQLQNSEAKTEQVKEPAKEEPKLVIKEKKQDESAKKEQELKKAKEEAEAAVEKETEKTEEEPVDNLLNDMKLKYYGKLAVEGSHLVDADGHEVLLMGVSTHGINWYPEYASAETIKSLRDTWGINVIRLAMYTSDYNGYCVAGKENQEKLKDIIDDAVEAATDNDMYVIIDWHTLNDADPNEYKADAIQFFGEMVRKYKDNENVIYEICNEPNGDTTWNDVRRYANEVIPVIRNVDAIILVGTPKWATDLDSVLDKPLDFDNIMYTYHFYAGTHHKAERNALRDALDEGLPVFISEYGLVDADGDGNLNEKEADYWYDMIRKEYGVSSCMWNLSNKDEGSAMINADCDKLSDFTEEDLSESAMWLIDQISQLKHSDLEQGVDWITPENNNR</sequence>
<accession>P22541</accession>
<feature type="signal peptide" evidence="3">
    <location>
        <begin position="1"/>
        <end position="34"/>
    </location>
</feature>
<feature type="chain" id="PRO_0000007842" description="Endoglucanase A">
    <location>
        <begin position="35"/>
        <end position="429"/>
    </location>
</feature>
<feature type="region of interest" description="Disordered" evidence="2">
    <location>
        <begin position="46"/>
        <end position="100"/>
    </location>
</feature>
<feature type="compositionally biased region" description="Basic and acidic residues" evidence="2">
    <location>
        <begin position="46"/>
        <end position="94"/>
    </location>
</feature>
<feature type="active site" description="Proton donor" evidence="1">
    <location>
        <position position="249"/>
    </location>
</feature>
<feature type="active site" description="Nucleophile" evidence="1">
    <location>
        <position position="334"/>
    </location>
</feature>
<reference key="1">
    <citation type="journal article" date="1990" name="J. Gen. Microbiol.">
        <title>Cloning and sequencing of the celA gene encoding endoglucanase A of Butyrivibrio fibrisolvens strain A46.</title>
        <authorList>
            <person name="Hazlewood G.P."/>
            <person name="Davidson K."/>
            <person name="Laurie J.I."/>
            <person name="Romaniec M.P.M."/>
            <person name="Gilbert H.J."/>
        </authorList>
    </citation>
    <scope>NUCLEOTIDE SEQUENCE [GENOMIC DNA]</scope>
    <scope>PROTEIN SEQUENCE OF 35-50</scope>
    <source>
        <strain>A46</strain>
    </source>
</reference>